<name>RL2_THEKO</name>
<accession>Q5JDH2</accession>
<evidence type="ECO:0000255" key="1">
    <source>
        <dbReference type="HAMAP-Rule" id="MF_01320"/>
    </source>
</evidence>
<evidence type="ECO:0000256" key="2">
    <source>
        <dbReference type="SAM" id="MobiDB-lite"/>
    </source>
</evidence>
<evidence type="ECO:0000269" key="3">
    <source>
    </source>
</evidence>
<evidence type="ECO:0000305" key="4"/>
<evidence type="ECO:0007744" key="5">
    <source>
        <dbReference type="PDB" id="6SKF"/>
    </source>
</evidence>
<evidence type="ECO:0007744" key="6">
    <source>
        <dbReference type="PDB" id="6SKG"/>
    </source>
</evidence>
<evidence type="ECO:0007744" key="7">
    <source>
        <dbReference type="PDB" id="6TH6"/>
    </source>
</evidence>
<keyword id="KW-0002">3D-structure</keyword>
<keyword id="KW-1185">Reference proteome</keyword>
<keyword id="KW-0687">Ribonucleoprotein</keyword>
<keyword id="KW-0689">Ribosomal protein</keyword>
<keyword id="KW-0694">RNA-binding</keyword>
<keyword id="KW-0699">rRNA-binding</keyword>
<reference key="1">
    <citation type="journal article" date="2005" name="Genome Res.">
        <title>Complete genome sequence of the hyperthermophilic archaeon Thermococcus kodakaraensis KOD1 and comparison with Pyrococcus genomes.</title>
        <authorList>
            <person name="Fukui T."/>
            <person name="Atomi H."/>
            <person name="Kanai T."/>
            <person name="Matsumi R."/>
            <person name="Fujiwara S."/>
            <person name="Imanaka T."/>
        </authorList>
    </citation>
    <scope>NUCLEOTIDE SEQUENCE [LARGE SCALE GENOMIC DNA]</scope>
    <source>
        <strain>ATCC BAA-918 / JCM 12380 / KOD1</strain>
    </source>
</reference>
<reference evidence="5 6 7" key="2">
    <citation type="journal article" date="2020" name="Nature">
        <title>Dynamic RNA acetylation revealed by quantitative cross-evolutionary mapping.</title>
        <authorList>
            <person name="Sas-Chen A."/>
            <person name="Thomas J.M."/>
            <person name="Matzov D."/>
            <person name="Taoka M."/>
            <person name="Nance K.D."/>
            <person name="Nir R."/>
            <person name="Bryson K.M."/>
            <person name="Shachar R."/>
            <person name="Liman G.L.S."/>
            <person name="Burkhart B.W."/>
            <person name="Gamage S.T."/>
            <person name="Nobe Y."/>
            <person name="Briney C.A."/>
            <person name="Levy M.J."/>
            <person name="Fuchs R.T."/>
            <person name="Robb G.B."/>
            <person name="Hartmann J."/>
            <person name="Sharma S."/>
            <person name="Lin Q."/>
            <person name="Florens L."/>
            <person name="Washburn M.P."/>
            <person name="Isobe T."/>
            <person name="Santangelo T.J."/>
            <person name="Shalev-Benami M."/>
            <person name="Meier J.L."/>
            <person name="Schwartz S."/>
        </authorList>
    </citation>
    <scope>STRUCTURE BY ELECTRON MICROSCOPY (2.55 ANGSTROMS) IN 70S RIBOSOME</scope>
    <scope>SUBUNIT</scope>
    <source>
        <strain>ATCC BAA-918 / TS559</strain>
    </source>
</reference>
<gene>
    <name evidence="1" type="primary">rpl2</name>
    <name type="ordered locus">TK1539</name>
</gene>
<proteinExistence type="evidence at protein level"/>
<dbReference type="EMBL" id="AP006878">
    <property type="protein sequence ID" value="BAD85728.1"/>
    <property type="molecule type" value="Genomic_DNA"/>
</dbReference>
<dbReference type="RefSeq" id="WP_011250490.1">
    <property type="nucleotide sequence ID" value="NC_006624.1"/>
</dbReference>
<dbReference type="PDB" id="6SKF">
    <property type="method" value="EM"/>
    <property type="resolution" value="2.95 A"/>
    <property type="chains" value="BC=1-239"/>
</dbReference>
<dbReference type="PDB" id="6SKG">
    <property type="method" value="EM"/>
    <property type="resolution" value="2.65 A"/>
    <property type="chains" value="BC=1-239"/>
</dbReference>
<dbReference type="PDB" id="6TH6">
    <property type="method" value="EM"/>
    <property type="resolution" value="2.55 A"/>
    <property type="chains" value="BC=1-239"/>
</dbReference>
<dbReference type="PDBsum" id="6SKF"/>
<dbReference type="PDBsum" id="6SKG"/>
<dbReference type="PDBsum" id="6TH6"/>
<dbReference type="EMDB" id="EMD-10223"/>
<dbReference type="EMDB" id="EMD-10224"/>
<dbReference type="EMDB" id="EMD-10503"/>
<dbReference type="SMR" id="Q5JDH2"/>
<dbReference type="FunCoup" id="Q5JDH2">
    <property type="interactions" value="147"/>
</dbReference>
<dbReference type="STRING" id="69014.TK1539"/>
<dbReference type="EnsemblBacteria" id="BAD85728">
    <property type="protein sequence ID" value="BAD85728"/>
    <property type="gene ID" value="TK1539"/>
</dbReference>
<dbReference type="GeneID" id="78448067"/>
<dbReference type="KEGG" id="tko:TK1539"/>
<dbReference type="PATRIC" id="fig|69014.16.peg.1499"/>
<dbReference type="eggNOG" id="arCOG04067">
    <property type="taxonomic scope" value="Archaea"/>
</dbReference>
<dbReference type="HOGENOM" id="CLU_036235_0_1_2"/>
<dbReference type="InParanoid" id="Q5JDH2"/>
<dbReference type="OrthoDB" id="5987at2157"/>
<dbReference type="PhylomeDB" id="Q5JDH2"/>
<dbReference type="Proteomes" id="UP000000536">
    <property type="component" value="Chromosome"/>
</dbReference>
<dbReference type="GO" id="GO:0022625">
    <property type="term" value="C:cytosolic large ribosomal subunit"/>
    <property type="evidence" value="ECO:0000318"/>
    <property type="project" value="GO_Central"/>
</dbReference>
<dbReference type="GO" id="GO:0003723">
    <property type="term" value="F:RNA binding"/>
    <property type="evidence" value="ECO:0000318"/>
    <property type="project" value="GO_Central"/>
</dbReference>
<dbReference type="GO" id="GO:0019843">
    <property type="term" value="F:rRNA binding"/>
    <property type="evidence" value="ECO:0007669"/>
    <property type="project" value="UniProtKB-UniRule"/>
</dbReference>
<dbReference type="GO" id="GO:0003735">
    <property type="term" value="F:structural constituent of ribosome"/>
    <property type="evidence" value="ECO:0000318"/>
    <property type="project" value="GO_Central"/>
</dbReference>
<dbReference type="GO" id="GO:0002181">
    <property type="term" value="P:cytoplasmic translation"/>
    <property type="evidence" value="ECO:0000318"/>
    <property type="project" value="GO_Central"/>
</dbReference>
<dbReference type="FunFam" id="2.30.30.30:FF:000001">
    <property type="entry name" value="50S ribosomal protein L2"/>
    <property type="match status" value="1"/>
</dbReference>
<dbReference type="FunFam" id="2.40.50.140:FF:000020">
    <property type="entry name" value="60S ribosomal protein L2"/>
    <property type="match status" value="1"/>
</dbReference>
<dbReference type="FunFam" id="4.10.950.10:FF:000002">
    <property type="entry name" value="60S ribosomal protein L2"/>
    <property type="match status" value="1"/>
</dbReference>
<dbReference type="Gene3D" id="2.30.30.30">
    <property type="match status" value="1"/>
</dbReference>
<dbReference type="Gene3D" id="2.40.50.140">
    <property type="entry name" value="Nucleic acid-binding proteins"/>
    <property type="match status" value="1"/>
</dbReference>
<dbReference type="Gene3D" id="4.10.950.10">
    <property type="entry name" value="Ribosomal protein L2, domain 3"/>
    <property type="match status" value="1"/>
</dbReference>
<dbReference type="HAMAP" id="MF_01320_A">
    <property type="entry name" value="Ribosomal_uL2_A"/>
    <property type="match status" value="1"/>
</dbReference>
<dbReference type="InterPro" id="IPR012340">
    <property type="entry name" value="NA-bd_OB-fold"/>
</dbReference>
<dbReference type="InterPro" id="IPR014722">
    <property type="entry name" value="Rib_uL2_dom2"/>
</dbReference>
<dbReference type="InterPro" id="IPR002171">
    <property type="entry name" value="Ribosomal_uL2"/>
</dbReference>
<dbReference type="InterPro" id="IPR023672">
    <property type="entry name" value="Ribosomal_uL2_arc_euk"/>
</dbReference>
<dbReference type="InterPro" id="IPR022669">
    <property type="entry name" value="Ribosomal_uL2_C"/>
</dbReference>
<dbReference type="InterPro" id="IPR014726">
    <property type="entry name" value="Ribosomal_uL2_dom3"/>
</dbReference>
<dbReference type="InterPro" id="IPR022666">
    <property type="entry name" value="Ribosomal_uL2_RNA-bd_dom"/>
</dbReference>
<dbReference type="InterPro" id="IPR008991">
    <property type="entry name" value="Translation_prot_SH3-like_sf"/>
</dbReference>
<dbReference type="NCBIfam" id="NF007180">
    <property type="entry name" value="PRK09612.1"/>
    <property type="match status" value="1"/>
</dbReference>
<dbReference type="PANTHER" id="PTHR13691:SF16">
    <property type="entry name" value="LARGE RIBOSOMAL SUBUNIT PROTEIN UL2"/>
    <property type="match status" value="1"/>
</dbReference>
<dbReference type="PANTHER" id="PTHR13691">
    <property type="entry name" value="RIBOSOMAL PROTEIN L2"/>
    <property type="match status" value="1"/>
</dbReference>
<dbReference type="Pfam" id="PF00181">
    <property type="entry name" value="Ribosomal_L2"/>
    <property type="match status" value="1"/>
</dbReference>
<dbReference type="Pfam" id="PF03947">
    <property type="entry name" value="Ribosomal_L2_C"/>
    <property type="match status" value="1"/>
</dbReference>
<dbReference type="PIRSF" id="PIRSF002158">
    <property type="entry name" value="Ribosomal_L2"/>
    <property type="match status" value="1"/>
</dbReference>
<dbReference type="SMART" id="SM01383">
    <property type="entry name" value="Ribosomal_L2"/>
    <property type="match status" value="1"/>
</dbReference>
<dbReference type="SMART" id="SM01382">
    <property type="entry name" value="Ribosomal_L2_C"/>
    <property type="match status" value="1"/>
</dbReference>
<dbReference type="SUPFAM" id="SSF50249">
    <property type="entry name" value="Nucleic acid-binding proteins"/>
    <property type="match status" value="1"/>
</dbReference>
<dbReference type="SUPFAM" id="SSF50104">
    <property type="entry name" value="Translation proteins SH3-like domain"/>
    <property type="match status" value="1"/>
</dbReference>
<feature type="chain" id="PRO_0000129725" description="Large ribosomal subunit protein uL2">
    <location>
        <begin position="1"/>
        <end position="239"/>
    </location>
</feature>
<feature type="region of interest" description="Disordered" evidence="2">
    <location>
        <begin position="200"/>
        <end position="239"/>
    </location>
</feature>
<feature type="compositionally biased region" description="Basic residues" evidence="2">
    <location>
        <begin position="222"/>
        <end position="239"/>
    </location>
</feature>
<organism>
    <name type="scientific">Thermococcus kodakarensis (strain ATCC BAA-918 / JCM 12380 / KOD1)</name>
    <name type="common">Pyrococcus kodakaraensis (strain KOD1)</name>
    <dbReference type="NCBI Taxonomy" id="69014"/>
    <lineage>
        <taxon>Archaea</taxon>
        <taxon>Methanobacteriati</taxon>
        <taxon>Methanobacteriota</taxon>
        <taxon>Thermococci</taxon>
        <taxon>Thermococcales</taxon>
        <taxon>Thermococcaceae</taxon>
        <taxon>Thermococcus</taxon>
    </lineage>
</organism>
<sequence length="239" mass="26041">MGKSLIQQRRGKGTTTFRAPSHRYRGAVRYVPLNLVQERTLRGVVEEILHDPGRTAPVARVKFEDGTKKLIIAPEGVLVGQEIYIGPEAPIAIGNTLPLAKIPEGTYVYDIEGVPGDGGKYVRAGGTYALVVSREKDKVIVQLPSGELKAFNPMCRATIGVVAGGGRLEKPIVKAGKAYYIAKARNRFWPKPRGVKMNAVNHPHGGKEHHIGRPSTVSRRAPPGRKVGHIAARRTGRRK</sequence>
<comment type="function">
    <text evidence="1">One of the primary rRNA binding proteins. Required for association of the 30S and 50S subunits to form the 70S ribosome, for tRNA binding and peptide bond formation. It has been suggested to have peptidyltransferase activity; this is somewhat controversial. Makes several contacts with the 16S rRNA in the 70S ribosome.</text>
</comment>
<comment type="subunit">
    <text evidence="1 3">Part of the 50S ribosomal subunit (PubMed:32555463). Forms a bridge to the 30S subunit in the 70S ribosome.</text>
</comment>
<comment type="similarity">
    <text evidence="1">Belongs to the universal ribosomal protein uL2 family.</text>
</comment>
<protein>
    <recommendedName>
        <fullName evidence="1">Large ribosomal subunit protein uL2</fullName>
    </recommendedName>
    <alternativeName>
        <fullName evidence="4">50S ribosomal protein L2</fullName>
    </alternativeName>
</protein>